<protein>
    <recommendedName>
        <fullName evidence="1">Cysteine--tRNA ligase</fullName>
        <ecNumber evidence="1">6.1.1.16</ecNumber>
    </recommendedName>
    <alternativeName>
        <fullName evidence="1">Cysteinyl-tRNA synthetase</fullName>
        <shortName evidence="1">CysRS</shortName>
    </alternativeName>
</protein>
<dbReference type="EC" id="6.1.1.16" evidence="1"/>
<dbReference type="EMBL" id="CP001227">
    <property type="protein sequence ID" value="ACR47350.1"/>
    <property type="molecule type" value="Genomic_DNA"/>
</dbReference>
<dbReference type="RefSeq" id="WP_012736608.1">
    <property type="nucleotide sequence ID" value="NC_012730.1"/>
</dbReference>
<dbReference type="SMR" id="C4K199"/>
<dbReference type="KEGG" id="rpk:RPR_02660"/>
<dbReference type="HOGENOM" id="CLU_013528_0_1_5"/>
<dbReference type="Proteomes" id="UP000005015">
    <property type="component" value="Chromosome"/>
</dbReference>
<dbReference type="GO" id="GO:0005829">
    <property type="term" value="C:cytosol"/>
    <property type="evidence" value="ECO:0007669"/>
    <property type="project" value="TreeGrafter"/>
</dbReference>
<dbReference type="GO" id="GO:0005524">
    <property type="term" value="F:ATP binding"/>
    <property type="evidence" value="ECO:0007669"/>
    <property type="project" value="UniProtKB-UniRule"/>
</dbReference>
<dbReference type="GO" id="GO:0004817">
    <property type="term" value="F:cysteine-tRNA ligase activity"/>
    <property type="evidence" value="ECO:0007669"/>
    <property type="project" value="UniProtKB-UniRule"/>
</dbReference>
<dbReference type="GO" id="GO:0008270">
    <property type="term" value="F:zinc ion binding"/>
    <property type="evidence" value="ECO:0007669"/>
    <property type="project" value="UniProtKB-UniRule"/>
</dbReference>
<dbReference type="GO" id="GO:0006423">
    <property type="term" value="P:cysteinyl-tRNA aminoacylation"/>
    <property type="evidence" value="ECO:0007669"/>
    <property type="project" value="UniProtKB-UniRule"/>
</dbReference>
<dbReference type="CDD" id="cd00672">
    <property type="entry name" value="CysRS_core"/>
    <property type="match status" value="1"/>
</dbReference>
<dbReference type="FunFam" id="3.40.50.620:FF:000068">
    <property type="entry name" value="Cysteine--tRNA ligase"/>
    <property type="match status" value="1"/>
</dbReference>
<dbReference type="Gene3D" id="1.20.120.1910">
    <property type="entry name" value="Cysteine-tRNA ligase, C-terminal anti-codon recognition domain"/>
    <property type="match status" value="1"/>
</dbReference>
<dbReference type="Gene3D" id="3.40.50.620">
    <property type="entry name" value="HUPs"/>
    <property type="match status" value="1"/>
</dbReference>
<dbReference type="HAMAP" id="MF_00041">
    <property type="entry name" value="Cys_tRNA_synth"/>
    <property type="match status" value="1"/>
</dbReference>
<dbReference type="InterPro" id="IPR015803">
    <property type="entry name" value="Cys-tRNA-ligase"/>
</dbReference>
<dbReference type="InterPro" id="IPR015273">
    <property type="entry name" value="Cys-tRNA-synt_Ia_DALR"/>
</dbReference>
<dbReference type="InterPro" id="IPR024909">
    <property type="entry name" value="Cys-tRNA/MSH_ligase"/>
</dbReference>
<dbReference type="InterPro" id="IPR014729">
    <property type="entry name" value="Rossmann-like_a/b/a_fold"/>
</dbReference>
<dbReference type="InterPro" id="IPR032678">
    <property type="entry name" value="tRNA-synt_1_cat_dom"/>
</dbReference>
<dbReference type="InterPro" id="IPR009080">
    <property type="entry name" value="tRNAsynth_Ia_anticodon-bd"/>
</dbReference>
<dbReference type="NCBIfam" id="TIGR00435">
    <property type="entry name" value="cysS"/>
    <property type="match status" value="1"/>
</dbReference>
<dbReference type="PANTHER" id="PTHR10890:SF3">
    <property type="entry name" value="CYSTEINE--TRNA LIGASE, CYTOPLASMIC"/>
    <property type="match status" value="1"/>
</dbReference>
<dbReference type="PANTHER" id="PTHR10890">
    <property type="entry name" value="CYSTEINYL-TRNA SYNTHETASE"/>
    <property type="match status" value="1"/>
</dbReference>
<dbReference type="Pfam" id="PF01406">
    <property type="entry name" value="tRNA-synt_1e"/>
    <property type="match status" value="1"/>
</dbReference>
<dbReference type="PRINTS" id="PR00983">
    <property type="entry name" value="TRNASYNTHCYS"/>
</dbReference>
<dbReference type="SMART" id="SM00840">
    <property type="entry name" value="DALR_2"/>
    <property type="match status" value="1"/>
</dbReference>
<dbReference type="SUPFAM" id="SSF47323">
    <property type="entry name" value="Anticodon-binding domain of a subclass of class I aminoacyl-tRNA synthetases"/>
    <property type="match status" value="1"/>
</dbReference>
<dbReference type="SUPFAM" id="SSF52374">
    <property type="entry name" value="Nucleotidylyl transferase"/>
    <property type="match status" value="1"/>
</dbReference>
<sequence length="459" mass="52983">MQIQFHLYNTLSRTKEVFNPQDQANVKMYVCGPTVYYNPHIGNSRSGVVYDLLYRIVIKIFGEKAVKYVRNITDVDDKIIDRAALLGVTIDELTDKVTKEFHKNMAYLGCMLPSIEPKATKHIDVMIAIIERLIAKDHAYIADNHVYFDVLSAPNYTELSNRNLEEMFEGVHVENSKTKKNPQDFVLWKPAKQNESANMNFESPWGLGRPGWHIECSAMSYKYLGENFDIHGGGADLIFPHHTNEIAQSRCAFPSSTYAKYWVHNGFLTVNGEKMSKSLGNFITVRDLMDKQIQGEVVRLFLLSSHYRRPLDYNDKAIEDAKKTLDYWYRAIENINVQKIDLPHDFMQSLLDDMNTPLAVKIINDYAKGVFISKTEEERQLNASAIITCANFIGLMNKTPHEWFNSGVDELYINELVNKRLEAKKQKNWLLADQIRNQLLEEKIILEDQPDGTTIWRKE</sequence>
<feature type="chain" id="PRO_1000202132" description="Cysteine--tRNA ligase">
    <location>
        <begin position="1"/>
        <end position="459"/>
    </location>
</feature>
<feature type="short sequence motif" description="'HIGH' region">
    <location>
        <begin position="33"/>
        <end position="43"/>
    </location>
</feature>
<feature type="short sequence motif" description="'KMSKS' region">
    <location>
        <begin position="274"/>
        <end position="278"/>
    </location>
</feature>
<feature type="binding site" evidence="1">
    <location>
        <position position="31"/>
    </location>
    <ligand>
        <name>Zn(2+)</name>
        <dbReference type="ChEBI" id="CHEBI:29105"/>
    </ligand>
</feature>
<feature type="binding site" evidence="1">
    <location>
        <position position="216"/>
    </location>
    <ligand>
        <name>Zn(2+)</name>
        <dbReference type="ChEBI" id="CHEBI:29105"/>
    </ligand>
</feature>
<feature type="binding site" evidence="1">
    <location>
        <position position="241"/>
    </location>
    <ligand>
        <name>Zn(2+)</name>
        <dbReference type="ChEBI" id="CHEBI:29105"/>
    </ligand>
</feature>
<feature type="binding site" evidence="1">
    <location>
        <position position="245"/>
    </location>
    <ligand>
        <name>Zn(2+)</name>
        <dbReference type="ChEBI" id="CHEBI:29105"/>
    </ligand>
</feature>
<feature type="binding site" evidence="1">
    <location>
        <position position="277"/>
    </location>
    <ligand>
        <name>ATP</name>
        <dbReference type="ChEBI" id="CHEBI:30616"/>
    </ligand>
</feature>
<name>SYC_RICPU</name>
<evidence type="ECO:0000255" key="1">
    <source>
        <dbReference type="HAMAP-Rule" id="MF_00041"/>
    </source>
</evidence>
<accession>C4K199</accession>
<keyword id="KW-0030">Aminoacyl-tRNA synthetase</keyword>
<keyword id="KW-0067">ATP-binding</keyword>
<keyword id="KW-0963">Cytoplasm</keyword>
<keyword id="KW-0436">Ligase</keyword>
<keyword id="KW-0479">Metal-binding</keyword>
<keyword id="KW-0547">Nucleotide-binding</keyword>
<keyword id="KW-0648">Protein biosynthesis</keyword>
<keyword id="KW-0862">Zinc</keyword>
<organism>
    <name type="scientific">Rickettsia peacockii (strain Rustic)</name>
    <dbReference type="NCBI Taxonomy" id="562019"/>
    <lineage>
        <taxon>Bacteria</taxon>
        <taxon>Pseudomonadati</taxon>
        <taxon>Pseudomonadota</taxon>
        <taxon>Alphaproteobacteria</taxon>
        <taxon>Rickettsiales</taxon>
        <taxon>Rickettsiaceae</taxon>
        <taxon>Rickettsieae</taxon>
        <taxon>Rickettsia</taxon>
        <taxon>spotted fever group</taxon>
    </lineage>
</organism>
<gene>
    <name evidence="1" type="primary">cysS</name>
    <name type="ordered locus">RPR_02660</name>
</gene>
<proteinExistence type="inferred from homology"/>
<comment type="catalytic activity">
    <reaction evidence="1">
        <text>tRNA(Cys) + L-cysteine + ATP = L-cysteinyl-tRNA(Cys) + AMP + diphosphate</text>
        <dbReference type="Rhea" id="RHEA:17773"/>
        <dbReference type="Rhea" id="RHEA-COMP:9661"/>
        <dbReference type="Rhea" id="RHEA-COMP:9679"/>
        <dbReference type="ChEBI" id="CHEBI:30616"/>
        <dbReference type="ChEBI" id="CHEBI:33019"/>
        <dbReference type="ChEBI" id="CHEBI:35235"/>
        <dbReference type="ChEBI" id="CHEBI:78442"/>
        <dbReference type="ChEBI" id="CHEBI:78517"/>
        <dbReference type="ChEBI" id="CHEBI:456215"/>
        <dbReference type="EC" id="6.1.1.16"/>
    </reaction>
</comment>
<comment type="cofactor">
    <cofactor evidence="1">
        <name>Zn(2+)</name>
        <dbReference type="ChEBI" id="CHEBI:29105"/>
    </cofactor>
    <text evidence="1">Binds 1 zinc ion per subunit.</text>
</comment>
<comment type="subunit">
    <text evidence="1">Monomer.</text>
</comment>
<comment type="subcellular location">
    <subcellularLocation>
        <location evidence="1">Cytoplasm</location>
    </subcellularLocation>
</comment>
<comment type="similarity">
    <text evidence="1">Belongs to the class-I aminoacyl-tRNA synthetase family.</text>
</comment>
<reference key="1">
    <citation type="journal article" date="2009" name="PLoS ONE">
        <title>Genome sequence of the endosymbiont Rickettsia peacockii and comparison with virulent Rickettsia rickettsii: identification of virulence factors.</title>
        <authorList>
            <person name="Felsheim R.F."/>
            <person name="Kurtti T.J."/>
            <person name="Munderloh U.G."/>
        </authorList>
    </citation>
    <scope>NUCLEOTIDE SEQUENCE [LARGE SCALE GENOMIC DNA]</scope>
    <source>
        <strain>Rustic</strain>
    </source>
</reference>